<feature type="initiator methionine" description="Removed" evidence="1">
    <location>
        <position position="1"/>
    </location>
</feature>
<feature type="chain" id="PRO_0000097385" description="Ribonuclease G">
    <location>
        <begin position="2"/>
        <end position="489"/>
    </location>
</feature>
<feature type="domain" description="S1 motif" evidence="3">
    <location>
        <begin position="39"/>
        <end position="128"/>
    </location>
</feature>
<feature type="binding site" evidence="2">
    <location>
        <position position="304"/>
    </location>
    <ligand>
        <name>Mg(2+)</name>
        <dbReference type="ChEBI" id="CHEBI:18420"/>
        <note>catalytic</note>
    </ligand>
</feature>
<feature type="binding site" evidence="2">
    <location>
        <position position="347"/>
    </location>
    <ligand>
        <name>Mg(2+)</name>
        <dbReference type="ChEBI" id="CHEBI:18420"/>
        <note>catalytic</note>
    </ligand>
</feature>
<keyword id="KW-0963">Cytoplasm</keyword>
<keyword id="KW-0255">Endonuclease</keyword>
<keyword id="KW-0378">Hydrolase</keyword>
<keyword id="KW-0460">Magnesium</keyword>
<keyword id="KW-0479">Metal-binding</keyword>
<keyword id="KW-0540">Nuclease</keyword>
<keyword id="KW-1185">Reference proteome</keyword>
<keyword id="KW-0694">RNA-binding</keyword>
<keyword id="KW-0698">rRNA processing</keyword>
<keyword id="KW-0699">rRNA-binding</keyword>
<keyword id="KW-0819">tRNA processing</keyword>
<keyword id="KW-0820">tRNA-binding</keyword>
<comment type="function">
    <text evidence="1">An endonuclease that acts in the processing of the 5'-end of 16S rRNA and 23S rRNA. It prefers 5'-monophosphorylated substrates and cleaves single-stranded sites rich in A and U residues; contributes to tRNA processing and mRNA turnover.</text>
</comment>
<comment type="cofactor">
    <cofactor evidence="2">
        <name>Mg(2+)</name>
        <dbReference type="ChEBI" id="CHEBI:18420"/>
    </cofactor>
    <text evidence="2">Binds 1 Mg(2+) ion per subunit.</text>
</comment>
<comment type="subunit">
    <text evidence="1">Homodimer, in equilibrium with possible higher multimers.</text>
</comment>
<comment type="subcellular location">
    <subcellularLocation>
        <location evidence="1">Cytoplasm</location>
    </subcellularLocation>
</comment>
<comment type="similarity">
    <text evidence="4">Belongs to the RNase E/G family. RNase G subfamily.</text>
</comment>
<reference key="1">
    <citation type="journal article" date="2002" name="Nucleic Acids Res.">
        <title>Genome sequence of Shigella flexneri 2a: insights into pathogenicity through comparison with genomes of Escherichia coli K12 and O157.</title>
        <authorList>
            <person name="Jin Q."/>
            <person name="Yuan Z."/>
            <person name="Xu J."/>
            <person name="Wang Y."/>
            <person name="Shen Y."/>
            <person name="Lu W."/>
            <person name="Wang J."/>
            <person name="Liu H."/>
            <person name="Yang J."/>
            <person name="Yang F."/>
            <person name="Zhang X."/>
            <person name="Zhang J."/>
            <person name="Yang G."/>
            <person name="Wu H."/>
            <person name="Qu D."/>
            <person name="Dong J."/>
            <person name="Sun L."/>
            <person name="Xue Y."/>
            <person name="Zhao A."/>
            <person name="Gao Y."/>
            <person name="Zhu J."/>
            <person name="Kan B."/>
            <person name="Ding K."/>
            <person name="Chen S."/>
            <person name="Cheng H."/>
            <person name="Yao Z."/>
            <person name="He B."/>
            <person name="Chen R."/>
            <person name="Ma D."/>
            <person name="Qiang B."/>
            <person name="Wen Y."/>
            <person name="Hou Y."/>
            <person name="Yu J."/>
        </authorList>
    </citation>
    <scope>NUCLEOTIDE SEQUENCE [LARGE SCALE GENOMIC DNA]</scope>
    <source>
        <strain>301 / Serotype 2a</strain>
    </source>
</reference>
<reference key="2">
    <citation type="journal article" date="2003" name="Infect. Immun.">
        <title>Complete genome sequence and comparative genomics of Shigella flexneri serotype 2a strain 2457T.</title>
        <authorList>
            <person name="Wei J."/>
            <person name="Goldberg M.B."/>
            <person name="Burland V."/>
            <person name="Venkatesan M.M."/>
            <person name="Deng W."/>
            <person name="Fournier G."/>
            <person name="Mayhew G.F."/>
            <person name="Plunkett G. III"/>
            <person name="Rose D.J."/>
            <person name="Darling A."/>
            <person name="Mau B."/>
            <person name="Perna N.T."/>
            <person name="Payne S.M."/>
            <person name="Runyen-Janecky L.J."/>
            <person name="Zhou S."/>
            <person name="Schwartz D.C."/>
            <person name="Blattner F.R."/>
        </authorList>
    </citation>
    <scope>NUCLEOTIDE SEQUENCE [LARGE SCALE GENOMIC DNA]</scope>
    <source>
        <strain>ATCC 700930 / 2457T / Serotype 2a</strain>
    </source>
</reference>
<gene>
    <name type="primary">rng</name>
    <name type="synonym">cafA</name>
    <name type="ordered locus">SF3285</name>
    <name type="ordered locus">S3502</name>
</gene>
<name>RNG_SHIFL</name>
<evidence type="ECO:0000250" key="1">
    <source>
        <dbReference type="UniProtKB" id="P0A9J0"/>
    </source>
</evidence>
<evidence type="ECO:0000250" key="2">
    <source>
        <dbReference type="UniProtKB" id="P21513"/>
    </source>
</evidence>
<evidence type="ECO:0000255" key="3">
    <source>
        <dbReference type="PROSITE-ProRule" id="PRU00180"/>
    </source>
</evidence>
<evidence type="ECO:0000305" key="4"/>
<sequence>MTAELLVNVTPSETRVAYIDGGILQEIHIEREARRGIVGNIYKGRVSRVLPGMQAAFVDIGLDKAAFLHASDIMPHTECVAGEEQKQFTVRDISELVRQGQDLMVQVVKDPLGTKGARLTTDITLPSRYLVFMPGASHVGVSQRIESESERERLKKVVAEYCDEQGGFIIRTAAEGVGEAELASDAAYLKRVWTKVMERKKRPQTRYQLYGELALAQRVLRDFADAELDRIRVDSRLTYEALLEFTSEYIPEMTSKLEHYTGRQPIFDLFDVENEIQRALERKVELKSGGYLIIDQTEAMTTVDINTGAFVGHRNLDDTIFNTNIEATQAIARQLRLRNLGGIIIIDFIDMNNEDHRRRVLHSLEQALSKDRVKTSVNGFSALGLVEMTRKRTRESIEHVLCNECPTCHGRGTVKTVETVCYEIMREIVRVHHAYDSDRFLVYASPAVAEALKGEESHSLAEVEIFVGKQVKVQIEPLYNQEQFDVVMM</sequence>
<protein>
    <recommendedName>
        <fullName>Ribonuclease G</fullName>
        <shortName>RNase G</shortName>
        <ecNumber>3.1.26.-</ecNumber>
    </recommendedName>
</protein>
<dbReference type="EC" id="3.1.26.-"/>
<dbReference type="EMBL" id="AE005674">
    <property type="protein sequence ID" value="AAN44749.2"/>
    <property type="molecule type" value="Genomic_DNA"/>
</dbReference>
<dbReference type="EMBL" id="AE014073">
    <property type="protein sequence ID" value="AAP18560.1"/>
    <property type="molecule type" value="Genomic_DNA"/>
</dbReference>
<dbReference type="RefSeq" id="NP_709042.2">
    <property type="nucleotide sequence ID" value="NC_004337.2"/>
</dbReference>
<dbReference type="RefSeq" id="WP_000123197.1">
    <property type="nucleotide sequence ID" value="NZ_WPGW01000026.1"/>
</dbReference>
<dbReference type="SMR" id="P0A9J3"/>
<dbReference type="STRING" id="198214.SF3285"/>
<dbReference type="PaxDb" id="198214-SF3285"/>
<dbReference type="GeneID" id="1025290"/>
<dbReference type="GeneID" id="93778739"/>
<dbReference type="KEGG" id="sfl:SF3285"/>
<dbReference type="KEGG" id="sfx:S3502"/>
<dbReference type="PATRIC" id="fig|198214.7.peg.3892"/>
<dbReference type="HOGENOM" id="CLU_003468_5_3_6"/>
<dbReference type="Proteomes" id="UP000001006">
    <property type="component" value="Chromosome"/>
</dbReference>
<dbReference type="Proteomes" id="UP000002673">
    <property type="component" value="Chromosome"/>
</dbReference>
<dbReference type="GO" id="GO:0005737">
    <property type="term" value="C:cytoplasm"/>
    <property type="evidence" value="ECO:0007669"/>
    <property type="project" value="UniProtKB-SubCell"/>
</dbReference>
<dbReference type="GO" id="GO:0004519">
    <property type="term" value="F:endonuclease activity"/>
    <property type="evidence" value="ECO:0007669"/>
    <property type="project" value="UniProtKB-KW"/>
</dbReference>
<dbReference type="GO" id="GO:0046872">
    <property type="term" value="F:metal ion binding"/>
    <property type="evidence" value="ECO:0007669"/>
    <property type="project" value="UniProtKB-KW"/>
</dbReference>
<dbReference type="GO" id="GO:0004540">
    <property type="term" value="F:RNA nuclease activity"/>
    <property type="evidence" value="ECO:0007669"/>
    <property type="project" value="InterPro"/>
</dbReference>
<dbReference type="GO" id="GO:0019843">
    <property type="term" value="F:rRNA binding"/>
    <property type="evidence" value="ECO:0007669"/>
    <property type="project" value="UniProtKB-KW"/>
</dbReference>
<dbReference type="GO" id="GO:0000049">
    <property type="term" value="F:tRNA binding"/>
    <property type="evidence" value="ECO:0007669"/>
    <property type="project" value="UniProtKB-KW"/>
</dbReference>
<dbReference type="GO" id="GO:0006364">
    <property type="term" value="P:rRNA processing"/>
    <property type="evidence" value="ECO:0007669"/>
    <property type="project" value="UniProtKB-KW"/>
</dbReference>
<dbReference type="GO" id="GO:0008033">
    <property type="term" value="P:tRNA processing"/>
    <property type="evidence" value="ECO:0007669"/>
    <property type="project" value="UniProtKB-KW"/>
</dbReference>
<dbReference type="CDD" id="cd04453">
    <property type="entry name" value="S1_RNase_E"/>
    <property type="match status" value="1"/>
</dbReference>
<dbReference type="FunFam" id="2.40.50.140:FF:000028">
    <property type="entry name" value="Ribonuclease G"/>
    <property type="match status" value="1"/>
</dbReference>
<dbReference type="FunFam" id="3.40.1260.20:FF:000001">
    <property type="entry name" value="Ribonuclease G Rng"/>
    <property type="match status" value="1"/>
</dbReference>
<dbReference type="Gene3D" id="2.40.50.140">
    <property type="entry name" value="Nucleic acid-binding proteins"/>
    <property type="match status" value="1"/>
</dbReference>
<dbReference type="Gene3D" id="3.40.1260.20">
    <property type="entry name" value="Ribonuclease E, catalytic domain"/>
    <property type="match status" value="1"/>
</dbReference>
<dbReference type="InterPro" id="IPR012340">
    <property type="entry name" value="NA-bd_OB-fold"/>
</dbReference>
<dbReference type="InterPro" id="IPR019307">
    <property type="entry name" value="RNA-bd_AU-1/RNase_E/G"/>
</dbReference>
<dbReference type="InterPro" id="IPR004659">
    <property type="entry name" value="RNase_E/G"/>
</dbReference>
<dbReference type="InterPro" id="IPR048583">
    <property type="entry name" value="RNase_E_G_thioredoxin-like"/>
</dbReference>
<dbReference type="InterPro" id="IPR003029">
    <property type="entry name" value="S1_domain"/>
</dbReference>
<dbReference type="NCBIfam" id="NF008689">
    <property type="entry name" value="PRK11712.1"/>
    <property type="match status" value="1"/>
</dbReference>
<dbReference type="NCBIfam" id="TIGR00757">
    <property type="entry name" value="RNaseEG"/>
    <property type="match status" value="1"/>
</dbReference>
<dbReference type="PANTHER" id="PTHR30001">
    <property type="entry name" value="RIBONUCLEASE"/>
    <property type="match status" value="1"/>
</dbReference>
<dbReference type="PANTHER" id="PTHR30001:SF0">
    <property type="entry name" value="RIBONUCLEASE G"/>
    <property type="match status" value="1"/>
</dbReference>
<dbReference type="Pfam" id="PF10150">
    <property type="entry name" value="RNase_E_G"/>
    <property type="match status" value="1"/>
</dbReference>
<dbReference type="Pfam" id="PF20833">
    <property type="entry name" value="RNase_E_G_Thio"/>
    <property type="match status" value="1"/>
</dbReference>
<dbReference type="Pfam" id="PF00575">
    <property type="entry name" value="S1"/>
    <property type="match status" value="1"/>
</dbReference>
<dbReference type="SMART" id="SM00316">
    <property type="entry name" value="S1"/>
    <property type="match status" value="1"/>
</dbReference>
<dbReference type="SUPFAM" id="SSF50249">
    <property type="entry name" value="Nucleic acid-binding proteins"/>
    <property type="match status" value="1"/>
</dbReference>
<dbReference type="PROSITE" id="PS50126">
    <property type="entry name" value="S1"/>
    <property type="match status" value="1"/>
</dbReference>
<organism>
    <name type="scientific">Shigella flexneri</name>
    <dbReference type="NCBI Taxonomy" id="623"/>
    <lineage>
        <taxon>Bacteria</taxon>
        <taxon>Pseudomonadati</taxon>
        <taxon>Pseudomonadota</taxon>
        <taxon>Gammaproteobacteria</taxon>
        <taxon>Enterobacterales</taxon>
        <taxon>Enterobacteriaceae</taxon>
        <taxon>Shigella</taxon>
    </lineage>
</organism>
<accession>P0A9J3</accession>
<accession>P25537</accession>
<accession>P76677</accession>
<proteinExistence type="inferred from homology"/>